<name>TRM2A_MOUSE</name>
<gene>
    <name evidence="11" type="primary">Trmt2a</name>
    <name evidence="9" type="synonym">Htf9-c</name>
    <name evidence="9" type="synonym">Htf9c</name>
</gene>
<reference key="1">
    <citation type="journal article" date="1991" name="Gene">
        <title>Characterization of the opposite-strand genes from the mouse bidirectionally transcribed HTF9 locus.</title>
        <authorList>
            <person name="Bressan A."/>
            <person name="Somma M.P."/>
            <person name="Lewis J."/>
            <person name="Santolamazza C."/>
            <person name="Copeland N.G."/>
            <person name="Gilbert D.J."/>
            <person name="Jenkins N.A."/>
            <person name="Lavia P."/>
        </authorList>
    </citation>
    <scope>NUCLEOTIDE SEQUENCE [GENOMIC DNA]</scope>
    <source>
        <strain>C57BL/6J</strain>
    </source>
</reference>
<reference key="2">
    <citation type="journal article" date="1997" name="Biochem. J.">
        <title>Expression of the murine RanBP1 and Htf9-c genes is regulated from a shared bidirectional promoter during cell cycle progression.</title>
        <authorList>
            <person name="Guarguaglini G."/>
            <person name="Battistoni A."/>
            <person name="Pittoggi C."/>
            <person name="Di Matteo G."/>
            <person name="Di Fiore B."/>
            <person name="Lavia P."/>
        </authorList>
    </citation>
    <scope>NUCLEOTIDE SEQUENCE [MRNA] (ISOFORM 1)</scope>
    <scope>PROMOTER ORGANIZATION</scope>
    <scope>INDUCTION</scope>
    <source>
        <strain>C57BL/6J</strain>
    </source>
</reference>
<reference key="3">
    <citation type="journal article" date="2009" name="PLoS Biol.">
        <title>Lineage-specific biology revealed by a finished genome assembly of the mouse.</title>
        <authorList>
            <person name="Church D.M."/>
            <person name="Goodstadt L."/>
            <person name="Hillier L.W."/>
            <person name="Zody M.C."/>
            <person name="Goldstein S."/>
            <person name="She X."/>
            <person name="Bult C.J."/>
            <person name="Agarwala R."/>
            <person name="Cherry J.L."/>
            <person name="DiCuccio M."/>
            <person name="Hlavina W."/>
            <person name="Kapustin Y."/>
            <person name="Meric P."/>
            <person name="Maglott D."/>
            <person name="Birtle Z."/>
            <person name="Marques A.C."/>
            <person name="Graves T."/>
            <person name="Zhou S."/>
            <person name="Teague B."/>
            <person name="Potamousis K."/>
            <person name="Churas C."/>
            <person name="Place M."/>
            <person name="Herschleb J."/>
            <person name="Runnheim R."/>
            <person name="Forrest D."/>
            <person name="Amos-Landgraf J."/>
            <person name="Schwartz D.C."/>
            <person name="Cheng Z."/>
            <person name="Lindblad-Toh K."/>
            <person name="Eichler E.E."/>
            <person name="Ponting C.P."/>
        </authorList>
    </citation>
    <scope>NUCLEOTIDE SEQUENCE [LARGE SCALE GENOMIC DNA]</scope>
    <source>
        <strain>C57BL/6J</strain>
    </source>
</reference>
<reference key="4">
    <citation type="journal article" date="2005" name="Science">
        <title>The transcriptional landscape of the mammalian genome.</title>
        <authorList>
            <person name="Carninci P."/>
            <person name="Kasukawa T."/>
            <person name="Katayama S."/>
            <person name="Gough J."/>
            <person name="Frith M.C."/>
            <person name="Maeda N."/>
            <person name="Oyama R."/>
            <person name="Ravasi T."/>
            <person name="Lenhard B."/>
            <person name="Wells C."/>
            <person name="Kodzius R."/>
            <person name="Shimokawa K."/>
            <person name="Bajic V.B."/>
            <person name="Brenner S.E."/>
            <person name="Batalov S."/>
            <person name="Forrest A.R."/>
            <person name="Zavolan M."/>
            <person name="Davis M.J."/>
            <person name="Wilming L.G."/>
            <person name="Aidinis V."/>
            <person name="Allen J.E."/>
            <person name="Ambesi-Impiombato A."/>
            <person name="Apweiler R."/>
            <person name="Aturaliya R.N."/>
            <person name="Bailey T.L."/>
            <person name="Bansal M."/>
            <person name="Baxter L."/>
            <person name="Beisel K.W."/>
            <person name="Bersano T."/>
            <person name="Bono H."/>
            <person name="Chalk A.M."/>
            <person name="Chiu K.P."/>
            <person name="Choudhary V."/>
            <person name="Christoffels A."/>
            <person name="Clutterbuck D.R."/>
            <person name="Crowe M.L."/>
            <person name="Dalla E."/>
            <person name="Dalrymple B.P."/>
            <person name="de Bono B."/>
            <person name="Della Gatta G."/>
            <person name="di Bernardo D."/>
            <person name="Down T."/>
            <person name="Engstrom P."/>
            <person name="Fagiolini M."/>
            <person name="Faulkner G."/>
            <person name="Fletcher C.F."/>
            <person name="Fukushima T."/>
            <person name="Furuno M."/>
            <person name="Futaki S."/>
            <person name="Gariboldi M."/>
            <person name="Georgii-Hemming P."/>
            <person name="Gingeras T.R."/>
            <person name="Gojobori T."/>
            <person name="Green R.E."/>
            <person name="Gustincich S."/>
            <person name="Harbers M."/>
            <person name="Hayashi Y."/>
            <person name="Hensch T.K."/>
            <person name="Hirokawa N."/>
            <person name="Hill D."/>
            <person name="Huminiecki L."/>
            <person name="Iacono M."/>
            <person name="Ikeo K."/>
            <person name="Iwama A."/>
            <person name="Ishikawa T."/>
            <person name="Jakt M."/>
            <person name="Kanapin A."/>
            <person name="Katoh M."/>
            <person name="Kawasawa Y."/>
            <person name="Kelso J."/>
            <person name="Kitamura H."/>
            <person name="Kitano H."/>
            <person name="Kollias G."/>
            <person name="Krishnan S.P."/>
            <person name="Kruger A."/>
            <person name="Kummerfeld S.K."/>
            <person name="Kurochkin I.V."/>
            <person name="Lareau L.F."/>
            <person name="Lazarevic D."/>
            <person name="Lipovich L."/>
            <person name="Liu J."/>
            <person name="Liuni S."/>
            <person name="McWilliam S."/>
            <person name="Madan Babu M."/>
            <person name="Madera M."/>
            <person name="Marchionni L."/>
            <person name="Matsuda H."/>
            <person name="Matsuzawa S."/>
            <person name="Miki H."/>
            <person name="Mignone F."/>
            <person name="Miyake S."/>
            <person name="Morris K."/>
            <person name="Mottagui-Tabar S."/>
            <person name="Mulder N."/>
            <person name="Nakano N."/>
            <person name="Nakauchi H."/>
            <person name="Ng P."/>
            <person name="Nilsson R."/>
            <person name="Nishiguchi S."/>
            <person name="Nishikawa S."/>
            <person name="Nori F."/>
            <person name="Ohara O."/>
            <person name="Okazaki Y."/>
            <person name="Orlando V."/>
            <person name="Pang K.C."/>
            <person name="Pavan W.J."/>
            <person name="Pavesi G."/>
            <person name="Pesole G."/>
            <person name="Petrovsky N."/>
            <person name="Piazza S."/>
            <person name="Reed J."/>
            <person name="Reid J.F."/>
            <person name="Ring B.Z."/>
            <person name="Ringwald M."/>
            <person name="Rost B."/>
            <person name="Ruan Y."/>
            <person name="Salzberg S.L."/>
            <person name="Sandelin A."/>
            <person name="Schneider C."/>
            <person name="Schoenbach C."/>
            <person name="Sekiguchi K."/>
            <person name="Semple C.A."/>
            <person name="Seno S."/>
            <person name="Sessa L."/>
            <person name="Sheng Y."/>
            <person name="Shibata Y."/>
            <person name="Shimada H."/>
            <person name="Shimada K."/>
            <person name="Silva D."/>
            <person name="Sinclair B."/>
            <person name="Sperling S."/>
            <person name="Stupka E."/>
            <person name="Sugiura K."/>
            <person name="Sultana R."/>
            <person name="Takenaka Y."/>
            <person name="Taki K."/>
            <person name="Tammoja K."/>
            <person name="Tan S.L."/>
            <person name="Tang S."/>
            <person name="Taylor M.S."/>
            <person name="Tegner J."/>
            <person name="Teichmann S.A."/>
            <person name="Ueda H.R."/>
            <person name="van Nimwegen E."/>
            <person name="Verardo R."/>
            <person name="Wei C.L."/>
            <person name="Yagi K."/>
            <person name="Yamanishi H."/>
            <person name="Zabarovsky E."/>
            <person name="Zhu S."/>
            <person name="Zimmer A."/>
            <person name="Hide W."/>
            <person name="Bult C."/>
            <person name="Grimmond S.M."/>
            <person name="Teasdale R.D."/>
            <person name="Liu E.T."/>
            <person name="Brusic V."/>
            <person name="Quackenbush J."/>
            <person name="Wahlestedt C."/>
            <person name="Mattick J.S."/>
            <person name="Hume D.A."/>
            <person name="Kai C."/>
            <person name="Sasaki D."/>
            <person name="Tomaru Y."/>
            <person name="Fukuda S."/>
            <person name="Kanamori-Katayama M."/>
            <person name="Suzuki M."/>
            <person name="Aoki J."/>
            <person name="Arakawa T."/>
            <person name="Iida J."/>
            <person name="Imamura K."/>
            <person name="Itoh M."/>
            <person name="Kato T."/>
            <person name="Kawaji H."/>
            <person name="Kawagashira N."/>
            <person name="Kawashima T."/>
            <person name="Kojima M."/>
            <person name="Kondo S."/>
            <person name="Konno H."/>
            <person name="Nakano K."/>
            <person name="Ninomiya N."/>
            <person name="Nishio T."/>
            <person name="Okada M."/>
            <person name="Plessy C."/>
            <person name="Shibata K."/>
            <person name="Shiraki T."/>
            <person name="Suzuki S."/>
            <person name="Tagami M."/>
            <person name="Waki K."/>
            <person name="Watahiki A."/>
            <person name="Okamura-Oho Y."/>
            <person name="Suzuki H."/>
            <person name="Kawai J."/>
            <person name="Hayashizaki Y."/>
        </authorList>
    </citation>
    <scope>NUCLEOTIDE SEQUENCE [LARGE SCALE MRNA] (ISOFORMS 1 AND 2)</scope>
    <source>
        <strain>C57BL/6J</strain>
        <tissue>Aorta</tissue>
        <tissue>Bone marrow</tissue>
        <tissue>Testis</tissue>
        <tissue>Vein</tissue>
    </source>
</reference>
<reference key="5">
    <citation type="journal article" date="2004" name="Genome Res.">
        <title>The status, quality, and expansion of the NIH full-length cDNA project: the Mammalian Gene Collection (MGC).</title>
        <authorList>
            <consortium name="The MGC Project Team"/>
        </authorList>
    </citation>
    <scope>NUCLEOTIDE SEQUENCE [LARGE SCALE MRNA] (ISOFORM 2)</scope>
    <source>
        <tissue>Olfactory epithelium</tissue>
    </source>
</reference>
<reference key="6">
    <citation type="journal article" date="1998" name="J. Biol. Chem.">
        <title>Interactions with single-stranded and double-stranded DNA-binding factors and alternative promoter conformation upon transcriptional activation of the Htf9-a/RanBP1 and Htf9-c genes.</title>
        <authorList>
            <person name="Di Matteo G."/>
            <person name="Salerno M."/>
            <person name="Guarguaglini G."/>
            <person name="Di Fiore B."/>
            <person name="Palitti F."/>
            <person name="Lavia P."/>
        </authorList>
    </citation>
    <scope>PROMOTER ORGANIZATION</scope>
    <scope>TISSUE SPECIFICITY</scope>
    <scope>INDUCTION</scope>
</reference>
<reference key="7">
    <citation type="journal article" date="2010" name="Cell">
        <title>A tissue-specific atlas of mouse protein phosphorylation and expression.</title>
        <authorList>
            <person name="Huttlin E.L."/>
            <person name="Jedrychowski M.P."/>
            <person name="Elias J.E."/>
            <person name="Goswami T."/>
            <person name="Rad R."/>
            <person name="Beausoleil S.A."/>
            <person name="Villen J."/>
            <person name="Haas W."/>
            <person name="Sowa M.E."/>
            <person name="Gygi S.P."/>
        </authorList>
    </citation>
    <scope>IDENTIFICATION BY MASS SPECTROMETRY [LARGE SCALE ANALYSIS]</scope>
    <source>
        <tissue>Lung</tissue>
        <tissue>Pancreas</tissue>
        <tissue>Spleen</tissue>
        <tissue>Testis</tissue>
    </source>
</reference>
<feature type="chain" id="PRO_0000081615" description="tRNA (uracil-5-)-methyltransferase homolog A">
    <location>
        <begin position="1"/>
        <end position="613"/>
    </location>
</feature>
<feature type="domain" description="RRM">
    <location>
        <begin position="63"/>
        <end position="136"/>
    </location>
</feature>
<feature type="region of interest" description="Disordered" evidence="5">
    <location>
        <begin position="1"/>
        <end position="46"/>
    </location>
</feature>
<feature type="coiled-coil region" evidence="3">
    <location>
        <begin position="170"/>
        <end position="200"/>
    </location>
</feature>
<feature type="active site" description="Nucleophile" evidence="4">
    <location>
        <position position="528"/>
    </location>
</feature>
<feature type="active site" description="Proton acceptor" evidence="1">
    <location>
        <position position="571"/>
    </location>
</feature>
<feature type="binding site" evidence="4">
    <location>
        <position position="401"/>
    </location>
    <ligand>
        <name>S-adenosyl-L-methionine</name>
        <dbReference type="ChEBI" id="CHEBI:59789"/>
    </ligand>
</feature>
<feature type="binding site" evidence="4">
    <location>
        <position position="451"/>
    </location>
    <ligand>
        <name>S-adenosyl-L-methionine</name>
        <dbReference type="ChEBI" id="CHEBI:59789"/>
    </ligand>
</feature>
<feature type="binding site" evidence="4">
    <location>
        <position position="500"/>
    </location>
    <ligand>
        <name>S-adenosyl-L-methionine</name>
        <dbReference type="ChEBI" id="CHEBI:59789"/>
    </ligand>
</feature>
<feature type="modified residue" description="Phosphoserine" evidence="2">
    <location>
        <position position="368"/>
    </location>
</feature>
<feature type="splice variant" id="VSP_061469" description="In isoform 2.">
    <original>ELSNVEFHCGRAEDLVPGLVSRLSSHQLVAVLDPPRAGLH</original>
    <variation>D</variation>
    <location>
        <begin position="468"/>
        <end position="507"/>
    </location>
</feature>
<feature type="sequence conflict" description="In Ref. 1; CAA29277 and 2; CAA39515." evidence="10" ref="1 2">
    <original>MSEPAAEVPEPMEDCGQDASAVPSSAAPLCQKEEAGPGPAAGPGTQ</original>
    <variation>MWTGWAEVGWGSSHYCRIKDRMGENWVSRVKERVSPGLRGVCTNGDLSAVWGSESYQLEPSARPVCSHVGSGAHGGLRPGLPSCTPALRPHYVKKRKQGLGQLQGLERK</variation>
    <location>
        <begin position="1"/>
        <end position="46"/>
    </location>
</feature>
<feature type="sequence conflict" description="In Ref. 1; CAA29277 and 2; CAA39515." evidence="10" ref="1 2">
    <original>A</original>
    <variation>G</variation>
    <location>
        <position position="115"/>
    </location>
</feature>
<feature type="sequence conflict" description="In Ref. 1; CAA29277 and 2; CAA39515." evidence="10" ref="1 2">
    <original>SVRLARPKADPMARKR</original>
    <variation>AYAWPDPRLTPWLGRG</variation>
    <location>
        <begin position="130"/>
        <end position="145"/>
    </location>
</feature>
<feature type="sequence conflict" description="In Ref. 1; CAA29277 and 2; CAA39515." evidence="10" ref="1 2">
    <original>IADVVTPLWTVPYTEQLEQKRLECERVLQKLAK</original>
    <variation>SCRCGDPSVDTALHVSSWSRSDWNVSGCYRNLAR</variation>
    <location>
        <begin position="158"/>
        <end position="190"/>
    </location>
</feature>
<comment type="function">
    <text evidence="2">S-adenosyl-L-methionine-dependent methyltransferase that catalyzes the formation of 5-methyl-uridine in tRNAs and some mRNAs. Mainly catalyzes the methylation of uridine at position 54 (m5U54) in cytosolic tRNAs. Also able to mediate the formation of 5-methyl-uridine in some mRNAs.</text>
</comment>
<comment type="catalytic activity">
    <reaction evidence="2">
        <text>uridine(54) in tRNA + S-adenosyl-L-methionine = 5-methyluridine(54) in tRNA + S-adenosyl-L-homocysteine + H(+)</text>
        <dbReference type="Rhea" id="RHEA:42712"/>
        <dbReference type="Rhea" id="RHEA-COMP:10167"/>
        <dbReference type="Rhea" id="RHEA-COMP:10193"/>
        <dbReference type="ChEBI" id="CHEBI:15378"/>
        <dbReference type="ChEBI" id="CHEBI:57856"/>
        <dbReference type="ChEBI" id="CHEBI:59789"/>
        <dbReference type="ChEBI" id="CHEBI:65315"/>
        <dbReference type="ChEBI" id="CHEBI:74447"/>
        <dbReference type="EC" id="2.1.1.35"/>
    </reaction>
    <physiologicalReaction direction="left-to-right" evidence="2">
        <dbReference type="Rhea" id="RHEA:42713"/>
    </physiologicalReaction>
</comment>
<comment type="catalytic activity">
    <reaction evidence="2">
        <text>a uridine in mRNA + S-adenosyl-L-methionine = a 5-methyluridine in mRNA + S-adenosyl-L-homocysteine + H(+)</text>
        <dbReference type="Rhea" id="RHEA:69863"/>
        <dbReference type="Rhea" id="RHEA-COMP:14658"/>
        <dbReference type="Rhea" id="RHEA-COMP:17793"/>
        <dbReference type="ChEBI" id="CHEBI:15378"/>
        <dbReference type="ChEBI" id="CHEBI:57856"/>
        <dbReference type="ChEBI" id="CHEBI:59789"/>
        <dbReference type="ChEBI" id="CHEBI:65315"/>
        <dbReference type="ChEBI" id="CHEBI:74447"/>
    </reaction>
    <physiologicalReaction direction="left-to-right" evidence="2">
        <dbReference type="Rhea" id="RHEA:69864"/>
    </physiologicalReaction>
</comment>
<comment type="subcellular location">
    <subcellularLocation>
        <location evidence="2">Cytoplasm</location>
        <location evidence="2">Cytosol</location>
    </subcellularLocation>
</comment>
<comment type="alternative products">
    <event type="alternative splicing"/>
    <isoform>
        <id>Q8BNV1-1</id>
        <name>1</name>
        <sequence type="displayed"/>
    </isoform>
    <isoform>
        <id>Q8BNV1-2</id>
        <name>2</name>
        <sequence type="described" ref="VSP_061469"/>
    </isoform>
</comment>
<comment type="tissue specificity">
    <text evidence="8">Widely expressed at low level. Expressed at higher level in proliferating cells.</text>
</comment>
<comment type="induction">
    <text evidence="7 8">In a cell-cycle manner (PubMed:9224656, PubMed:9417108). Transcription is activated at the G1/S transition of the cell cycle and peaks in S phase, while being repressed in quiescent tissues and growth-arrested cells (PubMed:9417108).</text>
</comment>
<comment type="miscellaneous">
    <text evidence="6 8">Htf9a (RanBP1) and Trmt2a are transcribed with opposite polarity from complementary DNA strands from a shared bidirectional TATA-less promoter.</text>
</comment>
<comment type="similarity">
    <text evidence="4">Belongs to the class I-like SAM-binding methyltransferase superfamily. RNA M5U methyltransferase family.</text>
</comment>
<comment type="sequence caution" evidence="10">
    <conflict type="erroneous initiation">
        <sequence resource="EMBL-CDS" id="AAH46976"/>
    </conflict>
</comment>
<evidence type="ECO:0000250" key="1">
    <source>
        <dbReference type="UniProtKB" id="P23003"/>
    </source>
</evidence>
<evidence type="ECO:0000250" key="2">
    <source>
        <dbReference type="UniProtKB" id="Q8IZ69"/>
    </source>
</evidence>
<evidence type="ECO:0000255" key="3"/>
<evidence type="ECO:0000255" key="4">
    <source>
        <dbReference type="PROSITE-ProRule" id="PRU01024"/>
    </source>
</evidence>
<evidence type="ECO:0000256" key="5">
    <source>
        <dbReference type="SAM" id="MobiDB-lite"/>
    </source>
</evidence>
<evidence type="ECO:0000269" key="6">
    <source>
    </source>
</evidence>
<evidence type="ECO:0000269" key="7">
    <source>
    </source>
</evidence>
<evidence type="ECO:0000269" key="8">
    <source>
    </source>
</evidence>
<evidence type="ECO:0000303" key="9">
    <source>
    </source>
</evidence>
<evidence type="ECO:0000305" key="10"/>
<evidence type="ECO:0000312" key="11">
    <source>
        <dbReference type="MGI" id="MGI:96270"/>
    </source>
</evidence>
<organism>
    <name type="scientific">Mus musculus</name>
    <name type="common">Mouse</name>
    <dbReference type="NCBI Taxonomy" id="10090"/>
    <lineage>
        <taxon>Eukaryota</taxon>
        <taxon>Metazoa</taxon>
        <taxon>Chordata</taxon>
        <taxon>Craniata</taxon>
        <taxon>Vertebrata</taxon>
        <taxon>Euteleostomi</taxon>
        <taxon>Mammalia</taxon>
        <taxon>Eutheria</taxon>
        <taxon>Euarchontoglires</taxon>
        <taxon>Glires</taxon>
        <taxon>Rodentia</taxon>
        <taxon>Myomorpha</taxon>
        <taxon>Muroidea</taxon>
        <taxon>Muridae</taxon>
        <taxon>Murinae</taxon>
        <taxon>Mus</taxon>
        <taxon>Mus</taxon>
    </lineage>
</organism>
<sequence length="613" mass="67488">MSEPAAEVPEPMEDCGQDASAVPSSAAPLCQKEEAGPGPAAGPGTQPGLYSYIRDDLFTSEIFKLELQNVPRHASFSDVRRFLGRFGLQSHKIKLFGQPPCAFVTFRSAAERDKALRVLHGALWKGCPLSVRLARPKADPMARKRRQEGDSEPSVTQIADVVTPLWTVPYTEQLEQKRLECERVLQKLAKEIGNTNRALLPWLLLQRQQHNKACCPLEGVKPSPQQTEYRNKCEFLVGVGVDGKDNTVGCRLGKYKGGTCAVAAPFDTVHIPEATKQVVKAFQEFIRSTPYSAYDPETYTGHWKQLTVRTSSRGQAMAIAYFHPQKLSSEEVAGLKASLVCHFMEGPGKASGVTSLYFVEEGQRKTPSQEGLPLEHMAGDQCIQEDLLGLTFRISPHAFFQVNTPAAEVLYTVIQEWAQLDGGSTVLDVCCGTGTIGLALAPKVKRVVGIELCQEAVEDARMNALTNELSNVEFHCGRAEDLVPGLVSRLSSHQLVAVLDPPRAGLHSKVILAIRKAENIKRLLYVSCNPRAAMGNFVDLCRAPSNRVKGTPFHPVKAVAVDLFPQTPHCEMLILFERMQQHPNGIEALEHQEFQTPRNLPDITPQETEISLS</sequence>
<protein>
    <recommendedName>
        <fullName evidence="10">tRNA (uracil-5-)-methyltransferase homolog A</fullName>
        <ecNumber evidence="2">2.1.1.35</ecNumber>
    </recommendedName>
    <alternativeName>
        <fullName evidence="9">HpaII tiny fragments locus 9c protein</fullName>
    </alternativeName>
    <alternativeName>
        <fullName evidence="10">mRNA (uracil-5-)-methyltransferase TRMT2A</fullName>
        <ecNumber evidence="2">2.1.1.-</ecNumber>
    </alternativeName>
</protein>
<keyword id="KW-0025">Alternative splicing</keyword>
<keyword id="KW-0175">Coiled coil</keyword>
<keyword id="KW-0963">Cytoplasm</keyword>
<keyword id="KW-0489">Methyltransferase</keyword>
<keyword id="KW-0507">mRNA processing</keyword>
<keyword id="KW-0597">Phosphoprotein</keyword>
<keyword id="KW-1185">Reference proteome</keyword>
<keyword id="KW-0694">RNA-binding</keyword>
<keyword id="KW-0949">S-adenosyl-L-methionine</keyword>
<keyword id="KW-0808">Transferase</keyword>
<keyword id="KW-0819">tRNA processing</keyword>
<accession>Q8BNV1</accession>
<accession>P70221</accession>
<accession>P70222</accession>
<accession>Q3UYU2</accession>
<accession>Q78E15</accession>
<accession>Q80VN8</accession>
<dbReference type="EC" id="2.1.1.35" evidence="2"/>
<dbReference type="EC" id="2.1.1.-" evidence="2"/>
<dbReference type="EMBL" id="X05830">
    <property type="protein sequence ID" value="CAA29277.1"/>
    <property type="molecule type" value="Genomic_DNA"/>
</dbReference>
<dbReference type="EMBL" id="X56044">
    <property type="protein sequence ID" value="CAA39515.1"/>
    <property type="molecule type" value="mRNA"/>
</dbReference>
<dbReference type="EMBL" id="AK080170">
    <property type="protein sequence ID" value="BAC37838.1"/>
    <property type="molecule type" value="mRNA"/>
</dbReference>
<dbReference type="EMBL" id="AK153190">
    <property type="protein sequence ID" value="BAE31790.1"/>
    <property type="molecule type" value="mRNA"/>
</dbReference>
<dbReference type="EMBL" id="AK133844">
    <property type="protein sequence ID" value="BAE21880.1"/>
    <property type="molecule type" value="mRNA"/>
</dbReference>
<dbReference type="EMBL" id="AK134368">
    <property type="protein sequence ID" value="BAE22119.1"/>
    <property type="molecule type" value="mRNA"/>
</dbReference>
<dbReference type="EMBL" id="AK150482">
    <property type="protein sequence ID" value="BAE29598.1"/>
    <property type="molecule type" value="mRNA"/>
</dbReference>
<dbReference type="EMBL" id="AK151311">
    <property type="protein sequence ID" value="BAE30293.1"/>
    <property type="molecule type" value="mRNA"/>
</dbReference>
<dbReference type="EMBL" id="AK151422">
    <property type="protein sequence ID" value="BAE30387.1"/>
    <property type="molecule type" value="mRNA"/>
</dbReference>
<dbReference type="EMBL" id="AK151725">
    <property type="protein sequence ID" value="BAE30643.1"/>
    <property type="molecule type" value="mRNA"/>
</dbReference>
<dbReference type="EMBL" id="AK151778">
    <property type="protein sequence ID" value="BAE30683.1"/>
    <property type="molecule type" value="mRNA"/>
</dbReference>
<dbReference type="EMBL" id="AK152055">
    <property type="protein sequence ID" value="BAE30911.1"/>
    <property type="molecule type" value="mRNA"/>
</dbReference>
<dbReference type="EMBL" id="AK152201">
    <property type="protein sequence ID" value="BAE31030.1"/>
    <property type="molecule type" value="mRNA"/>
</dbReference>
<dbReference type="EMBL" id="AK152363">
    <property type="protein sequence ID" value="BAE31153.1"/>
    <property type="molecule type" value="mRNA"/>
</dbReference>
<dbReference type="EMBL" id="AK152548">
    <property type="protein sequence ID" value="BAE31303.1"/>
    <property type="molecule type" value="mRNA"/>
</dbReference>
<dbReference type="EMBL" id="AK152903">
    <property type="protein sequence ID" value="BAE31584.1"/>
    <property type="molecule type" value="mRNA"/>
</dbReference>
<dbReference type="EMBL" id="AK153043">
    <property type="protein sequence ID" value="BAE31672.1"/>
    <property type="molecule type" value="mRNA"/>
</dbReference>
<dbReference type="EMBL" id="BC046976">
    <property type="protein sequence ID" value="AAH46976.1"/>
    <property type="status" value="ALT_INIT"/>
    <property type="molecule type" value="mRNA"/>
</dbReference>
<dbReference type="CCDS" id="CCDS37281.1">
    <molecule id="Q8BNV1-1"/>
</dbReference>
<dbReference type="CCDS" id="CCDS57020.1">
    <molecule id="Q8BNV1-2"/>
</dbReference>
<dbReference type="PIR" id="S01176">
    <property type="entry name" value="S01176"/>
</dbReference>
<dbReference type="RefSeq" id="NP_001074468.1">
    <molecule id="Q8BNV1-1"/>
    <property type="nucleotide sequence ID" value="NM_001080999.2"/>
</dbReference>
<dbReference type="RefSeq" id="NP_001074469.1">
    <property type="nucleotide sequence ID" value="NM_001081000.2"/>
</dbReference>
<dbReference type="RefSeq" id="NP_001182134.1">
    <molecule id="Q8BNV1-2"/>
    <property type="nucleotide sequence ID" value="NM_001195205.1"/>
</dbReference>
<dbReference type="SMR" id="Q8BNV1"/>
<dbReference type="BioGRID" id="200464">
    <property type="interactions" value="1"/>
</dbReference>
<dbReference type="FunCoup" id="Q8BNV1">
    <property type="interactions" value="3022"/>
</dbReference>
<dbReference type="IntAct" id="Q8BNV1">
    <property type="interactions" value="1"/>
</dbReference>
<dbReference type="MINT" id="Q8BNV1"/>
<dbReference type="STRING" id="10090.ENSMUSP00000111304"/>
<dbReference type="PhosphoSitePlus" id="Q8BNV1"/>
<dbReference type="PaxDb" id="10090-ENSMUSP00000111304"/>
<dbReference type="PeptideAtlas" id="Q8BNV1"/>
<dbReference type="ProteomicsDB" id="298315"/>
<dbReference type="ProteomicsDB" id="336881"/>
<dbReference type="Pumba" id="Q8BNV1"/>
<dbReference type="Antibodypedia" id="250">
    <property type="antibodies" value="348 antibodies from 26 providers"/>
</dbReference>
<dbReference type="DNASU" id="15547"/>
<dbReference type="Ensembl" id="ENSMUST00000115640.8">
    <molecule id="Q8BNV1-1"/>
    <property type="protein sequence ID" value="ENSMUSP00000111304.2"/>
    <property type="gene ID" value="ENSMUSG00000022721.20"/>
</dbReference>
<dbReference type="Ensembl" id="ENSMUST00000140206.8">
    <molecule id="Q8BNV1-2"/>
    <property type="protein sequence ID" value="ENSMUSP00000121216.2"/>
    <property type="gene ID" value="ENSMUSG00000022721.20"/>
</dbReference>
<dbReference type="GeneID" id="15547"/>
<dbReference type="KEGG" id="mmu:15547"/>
<dbReference type="UCSC" id="uc007ync.2">
    <molecule id="Q8BNV1-1"/>
    <property type="organism name" value="mouse"/>
</dbReference>
<dbReference type="AGR" id="MGI:96270"/>
<dbReference type="CTD" id="27037"/>
<dbReference type="MGI" id="MGI:96270">
    <property type="gene designation" value="Trmt2a"/>
</dbReference>
<dbReference type="VEuPathDB" id="HostDB:ENSMUSG00000022721"/>
<dbReference type="eggNOG" id="KOG2187">
    <property type="taxonomic scope" value="Eukaryota"/>
</dbReference>
<dbReference type="GeneTree" id="ENSGT00530000063723"/>
<dbReference type="HOGENOM" id="CLU_014689_4_2_1"/>
<dbReference type="InParanoid" id="Q8BNV1"/>
<dbReference type="OrthoDB" id="10250660at2759"/>
<dbReference type="PhylomeDB" id="Q8BNV1"/>
<dbReference type="TreeFam" id="TF314569"/>
<dbReference type="BioGRID-ORCS" id="15547">
    <property type="hits" value="1 hit in 75 CRISPR screens"/>
</dbReference>
<dbReference type="ChiTaRS" id="Trmt2a">
    <property type="organism name" value="mouse"/>
</dbReference>
<dbReference type="PRO" id="PR:Q8BNV1"/>
<dbReference type="Proteomes" id="UP000000589">
    <property type="component" value="Chromosome 16"/>
</dbReference>
<dbReference type="RNAct" id="Q8BNV1">
    <property type="molecule type" value="protein"/>
</dbReference>
<dbReference type="Bgee" id="ENSMUSG00000022721">
    <property type="expression patterns" value="Expressed in ventricular zone and 111 other cell types or tissues"/>
</dbReference>
<dbReference type="ExpressionAtlas" id="Q8BNV1">
    <property type="expression patterns" value="baseline and differential"/>
</dbReference>
<dbReference type="GO" id="GO:0005829">
    <property type="term" value="C:cytosol"/>
    <property type="evidence" value="ECO:0007669"/>
    <property type="project" value="UniProtKB-SubCell"/>
</dbReference>
<dbReference type="GO" id="GO:0008169">
    <property type="term" value="F:C-methyltransferase activity"/>
    <property type="evidence" value="ECO:0000250"/>
    <property type="project" value="UniProtKB"/>
</dbReference>
<dbReference type="GO" id="GO:0003723">
    <property type="term" value="F:RNA binding"/>
    <property type="evidence" value="ECO:0007669"/>
    <property type="project" value="UniProtKB-KW"/>
</dbReference>
<dbReference type="GO" id="GO:0030697">
    <property type="term" value="F:tRNA (uracil(54)-C5)-methyltransferase activity, S-adenosyl methionine-dependent"/>
    <property type="evidence" value="ECO:0000250"/>
    <property type="project" value="UniProtKB"/>
</dbReference>
<dbReference type="GO" id="GO:0032259">
    <property type="term" value="P:methylation"/>
    <property type="evidence" value="ECO:0007669"/>
    <property type="project" value="UniProtKB-KW"/>
</dbReference>
<dbReference type="GO" id="GO:0006397">
    <property type="term" value="P:mRNA processing"/>
    <property type="evidence" value="ECO:0007669"/>
    <property type="project" value="UniProtKB-KW"/>
</dbReference>
<dbReference type="GO" id="GO:0008033">
    <property type="term" value="P:tRNA processing"/>
    <property type="evidence" value="ECO:0007669"/>
    <property type="project" value="UniProtKB-KW"/>
</dbReference>
<dbReference type="CDD" id="cd02440">
    <property type="entry name" value="AdoMet_MTases"/>
    <property type="match status" value="1"/>
</dbReference>
<dbReference type="CDD" id="cd12439">
    <property type="entry name" value="RRM_TRMT2A"/>
    <property type="match status" value="1"/>
</dbReference>
<dbReference type="FunFam" id="2.40.50.1070:FF:000005">
    <property type="entry name" value="tRNA (Uracil-5-)-methyltransferase homolog A isoform X1"/>
    <property type="match status" value="1"/>
</dbReference>
<dbReference type="FunFam" id="3.30.70.330:FF:000619">
    <property type="entry name" value="tRNA methyltransferase 2 homolog A"/>
    <property type="match status" value="1"/>
</dbReference>
<dbReference type="Gene3D" id="2.40.50.1070">
    <property type="match status" value="1"/>
</dbReference>
<dbReference type="Gene3D" id="3.30.70.330">
    <property type="match status" value="1"/>
</dbReference>
<dbReference type="Gene3D" id="3.40.50.150">
    <property type="entry name" value="Vaccinia Virus protein VP39"/>
    <property type="match status" value="1"/>
</dbReference>
<dbReference type="InterPro" id="IPR012677">
    <property type="entry name" value="Nucleotide-bd_a/b_plait_sf"/>
</dbReference>
<dbReference type="InterPro" id="IPR035979">
    <property type="entry name" value="RBD_domain_sf"/>
</dbReference>
<dbReference type="InterPro" id="IPR029063">
    <property type="entry name" value="SAM-dependent_MTases_sf"/>
</dbReference>
<dbReference type="InterPro" id="IPR045850">
    <property type="entry name" value="TRM2_met"/>
</dbReference>
<dbReference type="InterPro" id="IPR034262">
    <property type="entry name" value="TRMT2A_RRM"/>
</dbReference>
<dbReference type="InterPro" id="IPR010280">
    <property type="entry name" value="U5_MeTrfase_fam"/>
</dbReference>
<dbReference type="PANTHER" id="PTHR45904">
    <property type="entry name" value="TRNA (URACIL-5-)-METHYLTRANSFERASE"/>
    <property type="match status" value="1"/>
</dbReference>
<dbReference type="PANTHER" id="PTHR45904:SF2">
    <property type="entry name" value="TRNA (URACIL-5-)-METHYLTRANSFERASE HOMOLOG A"/>
    <property type="match status" value="1"/>
</dbReference>
<dbReference type="Pfam" id="PF05958">
    <property type="entry name" value="tRNA_U5-meth_tr"/>
    <property type="match status" value="1"/>
</dbReference>
<dbReference type="SUPFAM" id="SSF54928">
    <property type="entry name" value="RNA-binding domain, RBD"/>
    <property type="match status" value="1"/>
</dbReference>
<dbReference type="SUPFAM" id="SSF53335">
    <property type="entry name" value="S-adenosyl-L-methionine-dependent methyltransferases"/>
    <property type="match status" value="1"/>
</dbReference>
<dbReference type="PROSITE" id="PS51687">
    <property type="entry name" value="SAM_MT_RNA_M5U"/>
    <property type="match status" value="1"/>
</dbReference>
<proteinExistence type="evidence at protein level"/>